<dbReference type="EMBL" id="EF067921">
    <property type="protein sequence ID" value="ABK20818.1"/>
    <property type="molecule type" value="Genomic_DNA"/>
</dbReference>
<dbReference type="RefSeq" id="YP_874595.1">
    <property type="nucleotide sequence ID" value="NC_008589.1"/>
</dbReference>
<dbReference type="SMR" id="A0T0Y3"/>
<dbReference type="STRING" id="35128.A0T0Y3"/>
<dbReference type="GeneID" id="4524758"/>
<dbReference type="InParanoid" id="A0T0Y3"/>
<dbReference type="GO" id="GO:0009507">
    <property type="term" value="C:chloroplast"/>
    <property type="evidence" value="ECO:0007669"/>
    <property type="project" value="UniProtKB-SubCell"/>
</dbReference>
<dbReference type="GO" id="GO:0005762">
    <property type="term" value="C:mitochondrial large ribosomal subunit"/>
    <property type="evidence" value="ECO:0000318"/>
    <property type="project" value="GO_Central"/>
</dbReference>
<dbReference type="GO" id="GO:0070180">
    <property type="term" value="F:large ribosomal subunit rRNA binding"/>
    <property type="evidence" value="ECO:0000318"/>
    <property type="project" value="GO_Central"/>
</dbReference>
<dbReference type="GO" id="GO:0003735">
    <property type="term" value="F:structural constituent of ribosome"/>
    <property type="evidence" value="ECO:0000318"/>
    <property type="project" value="GO_Central"/>
</dbReference>
<dbReference type="GO" id="GO:0006412">
    <property type="term" value="P:translation"/>
    <property type="evidence" value="ECO:0007669"/>
    <property type="project" value="UniProtKB-UniRule"/>
</dbReference>
<dbReference type="CDD" id="cd00337">
    <property type="entry name" value="Ribosomal_uL14"/>
    <property type="match status" value="1"/>
</dbReference>
<dbReference type="FunFam" id="2.40.150.20:FF:000001">
    <property type="entry name" value="50S ribosomal protein L14"/>
    <property type="match status" value="1"/>
</dbReference>
<dbReference type="Gene3D" id="2.40.150.20">
    <property type="entry name" value="Ribosomal protein L14"/>
    <property type="match status" value="1"/>
</dbReference>
<dbReference type="HAMAP" id="MF_01367">
    <property type="entry name" value="Ribosomal_uL14"/>
    <property type="match status" value="1"/>
</dbReference>
<dbReference type="InterPro" id="IPR000218">
    <property type="entry name" value="Ribosomal_uL14"/>
</dbReference>
<dbReference type="InterPro" id="IPR005745">
    <property type="entry name" value="Ribosomal_uL14_bac-type"/>
</dbReference>
<dbReference type="InterPro" id="IPR019972">
    <property type="entry name" value="Ribosomal_uL14_CS"/>
</dbReference>
<dbReference type="InterPro" id="IPR036853">
    <property type="entry name" value="Ribosomal_uL14_sf"/>
</dbReference>
<dbReference type="NCBIfam" id="TIGR01067">
    <property type="entry name" value="rplN_bact"/>
    <property type="match status" value="1"/>
</dbReference>
<dbReference type="PANTHER" id="PTHR11761">
    <property type="entry name" value="50S/60S RIBOSOMAL PROTEIN L14/L23"/>
    <property type="match status" value="1"/>
</dbReference>
<dbReference type="PANTHER" id="PTHR11761:SF3">
    <property type="entry name" value="LARGE RIBOSOMAL SUBUNIT PROTEIN UL14M"/>
    <property type="match status" value="1"/>
</dbReference>
<dbReference type="Pfam" id="PF00238">
    <property type="entry name" value="Ribosomal_L14"/>
    <property type="match status" value="1"/>
</dbReference>
<dbReference type="SMART" id="SM01374">
    <property type="entry name" value="Ribosomal_L14"/>
    <property type="match status" value="1"/>
</dbReference>
<dbReference type="SUPFAM" id="SSF50193">
    <property type="entry name" value="Ribosomal protein L14"/>
    <property type="match status" value="1"/>
</dbReference>
<dbReference type="PROSITE" id="PS00049">
    <property type="entry name" value="RIBOSOMAL_L14"/>
    <property type="match status" value="1"/>
</dbReference>
<geneLocation type="chloroplast"/>
<organism>
    <name type="scientific">Thalassiosira pseudonana</name>
    <name type="common">Marine diatom</name>
    <name type="synonym">Cyclotella nana</name>
    <dbReference type="NCBI Taxonomy" id="35128"/>
    <lineage>
        <taxon>Eukaryota</taxon>
        <taxon>Sar</taxon>
        <taxon>Stramenopiles</taxon>
        <taxon>Ochrophyta</taxon>
        <taxon>Bacillariophyta</taxon>
        <taxon>Coscinodiscophyceae</taxon>
        <taxon>Thalassiosirophycidae</taxon>
        <taxon>Thalassiosirales</taxon>
        <taxon>Thalassiosiraceae</taxon>
        <taxon>Thalassiosira</taxon>
    </lineage>
</organism>
<comment type="function">
    <text evidence="1">Binds to 23S rRNA.</text>
</comment>
<comment type="subunit">
    <text evidence="1">Part of the 50S ribosomal subunit.</text>
</comment>
<comment type="subcellular location">
    <subcellularLocation>
        <location>Plastid</location>
        <location>Chloroplast</location>
    </subcellularLocation>
</comment>
<comment type="similarity">
    <text evidence="1">Belongs to the universal ribosomal protein uL14 family.</text>
</comment>
<evidence type="ECO:0000255" key="1">
    <source>
        <dbReference type="HAMAP-Rule" id="MF_01367"/>
    </source>
</evidence>
<evidence type="ECO:0000305" key="2"/>
<reference key="1">
    <citation type="journal article" date="2007" name="Mol. Genet. Genomics">
        <title>Chloroplast genomes of the diatoms Phaeodactylum tricornutum and Thalassiosira pseudonana: comparison with other plastid genomes of the red lineage.</title>
        <authorList>
            <person name="Oudot-Le Secq M.-P."/>
            <person name="Grimwood J."/>
            <person name="Shapiro H."/>
            <person name="Armbrust E.V."/>
            <person name="Bowler C."/>
            <person name="Green B.R."/>
        </authorList>
    </citation>
    <scope>NUCLEOTIDE SEQUENCE [LARGE SCALE GENOMIC DNA]</scope>
    <source>
        <strain>CCMP1335 / NEPCC58 / CCAP 1085/12</strain>
    </source>
</reference>
<gene>
    <name evidence="1" type="primary">rpl14</name>
</gene>
<feature type="chain" id="PRO_0000276377" description="Large ribosomal subunit protein uL14c">
    <location>
        <begin position="1"/>
        <end position="121"/>
    </location>
</feature>
<keyword id="KW-0150">Chloroplast</keyword>
<keyword id="KW-0934">Plastid</keyword>
<keyword id="KW-0687">Ribonucleoprotein</keyword>
<keyword id="KW-0689">Ribosomal protein</keyword>
<keyword id="KW-0694">RNA-binding</keyword>
<keyword id="KW-0699">rRNA-binding</keyword>
<name>RK14_THAPS</name>
<accession>A0T0Y3</accession>
<sequence>MIYPQTMLTVADNTGAKKIMCIRVLGGNRKYGKIGDTIIGVVKEAIPNMPIKKSDVVRAIIVRTSKTIRRADGMYIRFDDNAAVIVNMENNPRGTRVFGPVAREIRDKNFSKIVSLAPEVL</sequence>
<proteinExistence type="inferred from homology"/>
<protein>
    <recommendedName>
        <fullName evidence="1">Large ribosomal subunit protein uL14c</fullName>
    </recommendedName>
    <alternativeName>
        <fullName evidence="2">50S ribosomal protein L14, chloroplastic</fullName>
    </alternativeName>
</protein>